<organism>
    <name type="scientific">Mycobacterium tuberculosis (strain ATCC 25618 / H37Rv)</name>
    <dbReference type="NCBI Taxonomy" id="83332"/>
    <lineage>
        <taxon>Bacteria</taxon>
        <taxon>Bacillati</taxon>
        <taxon>Actinomycetota</taxon>
        <taxon>Actinomycetes</taxon>
        <taxon>Mycobacteriales</taxon>
        <taxon>Mycobacteriaceae</taxon>
        <taxon>Mycobacterium</taxon>
        <taxon>Mycobacterium tuberculosis complex</taxon>
    </lineage>
</organism>
<comment type="function">
    <text evidence="3">Aminotransferase that catalyzes the conversion of aromatic amino acids and 2-oxoglutarate into corresponding aromatic oxo acids and L-glutamate (PubMed:26738801). Shows excellent activity with phenylalanine, and lower activity with tyrosine and tryptophan (PubMed:26738801). Has no significant activity with histidinol phosphate (PubMed:26738801).</text>
</comment>
<comment type="catalytic activity">
    <reaction evidence="1 3">
        <text>an aromatic L-alpha-amino acid + 2-oxoglutarate = an aromatic oxo-acid + L-glutamate</text>
        <dbReference type="Rhea" id="RHEA:17533"/>
        <dbReference type="ChEBI" id="CHEBI:16810"/>
        <dbReference type="ChEBI" id="CHEBI:29985"/>
        <dbReference type="ChEBI" id="CHEBI:73309"/>
        <dbReference type="ChEBI" id="CHEBI:84824"/>
        <dbReference type="EC" id="2.6.1.57"/>
    </reaction>
</comment>
<comment type="catalytic activity">
    <reaction evidence="3">
        <text>L-phenylalanine + 2-oxoglutarate = 3-phenylpyruvate + L-glutamate</text>
        <dbReference type="Rhea" id="RHEA:25152"/>
        <dbReference type="ChEBI" id="CHEBI:16810"/>
        <dbReference type="ChEBI" id="CHEBI:18005"/>
        <dbReference type="ChEBI" id="CHEBI:29985"/>
        <dbReference type="ChEBI" id="CHEBI:58095"/>
        <dbReference type="EC" id="2.6.1.57"/>
    </reaction>
</comment>
<comment type="cofactor">
    <cofactor evidence="1 3">
        <name>pyridoxal 5'-phosphate</name>
        <dbReference type="ChEBI" id="CHEBI:597326"/>
    </cofactor>
</comment>
<comment type="activity regulation">
    <text evidence="3">The aminotransferase activity with phenylalanine is not inhibited by 2-(N-morpholino)ethanesulfonic acid (MES).</text>
</comment>
<comment type="biophysicochemical properties">
    <kinetics>
        <KM evidence="3">0.036 mM for phenylalanine</KM>
        <KM evidence="3">0.86 mM for tyrosine</KM>
        <KM evidence="3">6.26 mM for tryptophan</KM>
        <text evidence="3">kcat is 350 sec(-1) with phenylalanine as substrate. kcat is 278 sec(-1) with tyrosine as substrate. kcat is 960 sec(-1) with tryptophan as substrate.</text>
    </kinetics>
</comment>
<comment type="subunit">
    <text evidence="1 2 3">Homodimer.</text>
</comment>
<comment type="domain">
    <text evidence="3">The hydrophobic nature of both the substrate binding pocket and the N-terminal lid is responsible for the discrimination of a polar substrate such as histidinol phosphate, while facilitating the binding of Phe and other aromatic residues such as Tyr and Trp.</text>
</comment>
<comment type="similarity">
    <text evidence="1 6">Belongs to the class-II pyridoxal-phosphate-dependent aminotransferase family.</text>
</comment>
<feature type="chain" id="PRO_0000153517" description="Aromatic amino acid aminotransferase">
    <location>
        <begin position="1"/>
        <end position="353"/>
    </location>
</feature>
<feature type="modified residue" description="N6-(pyridoxal phosphate)lysine" evidence="1 3 8">
    <location>
        <position position="217"/>
    </location>
</feature>
<feature type="helix" evidence="10">
    <location>
        <begin position="7"/>
        <end position="9"/>
    </location>
</feature>
<feature type="strand" evidence="10">
    <location>
        <begin position="24"/>
        <end position="26"/>
    </location>
</feature>
<feature type="helix" evidence="10">
    <location>
        <begin position="38"/>
        <end position="48"/>
    </location>
</feature>
<feature type="turn" evidence="10">
    <location>
        <begin position="49"/>
        <end position="52"/>
    </location>
</feature>
<feature type="helix" evidence="10">
    <location>
        <begin position="60"/>
        <end position="70"/>
    </location>
</feature>
<feature type="helix" evidence="10">
    <location>
        <begin position="76"/>
        <end position="78"/>
    </location>
</feature>
<feature type="strand" evidence="10">
    <location>
        <begin position="79"/>
        <end position="83"/>
    </location>
</feature>
<feature type="helix" evidence="10">
    <location>
        <begin position="84"/>
        <end position="96"/>
    </location>
</feature>
<feature type="strand" evidence="10">
    <location>
        <begin position="102"/>
        <end position="108"/>
    </location>
</feature>
<feature type="helix" evidence="10">
    <location>
        <begin position="113"/>
        <end position="119"/>
    </location>
</feature>
<feature type="strand" evidence="10">
    <location>
        <begin position="123"/>
        <end position="128"/>
    </location>
</feature>
<feature type="helix" evidence="10">
    <location>
        <begin position="136"/>
        <end position="141"/>
    </location>
</feature>
<feature type="strand" evidence="10">
    <location>
        <begin position="147"/>
        <end position="155"/>
    </location>
</feature>
<feature type="turn" evidence="10">
    <location>
        <begin position="157"/>
        <end position="159"/>
    </location>
</feature>
<feature type="helix" evidence="10">
    <location>
        <begin position="165"/>
        <end position="174"/>
    </location>
</feature>
<feature type="strand" evidence="10">
    <location>
        <begin position="179"/>
        <end position="184"/>
    </location>
</feature>
<feature type="helix" evidence="10">
    <location>
        <begin position="188"/>
        <end position="190"/>
    </location>
</feature>
<feature type="helix" evidence="10">
    <location>
        <begin position="199"/>
        <end position="205"/>
    </location>
</feature>
<feature type="strand" evidence="10">
    <location>
        <begin position="209"/>
        <end position="217"/>
    </location>
</feature>
<feature type="turn" evidence="10">
    <location>
        <begin position="222"/>
        <end position="224"/>
    </location>
</feature>
<feature type="strand" evidence="10">
    <location>
        <begin position="227"/>
        <end position="230"/>
    </location>
</feature>
<feature type="helix" evidence="10">
    <location>
        <begin position="233"/>
        <end position="242"/>
    </location>
</feature>
<feature type="helix" evidence="10">
    <location>
        <begin position="250"/>
        <end position="261"/>
    </location>
</feature>
<feature type="helix" evidence="10">
    <location>
        <begin position="263"/>
        <end position="287"/>
    </location>
</feature>
<feature type="strand" evidence="10">
    <location>
        <begin position="296"/>
        <end position="301"/>
    </location>
</feature>
<feature type="helix" evidence="10">
    <location>
        <begin position="304"/>
        <end position="306"/>
    </location>
</feature>
<feature type="helix" evidence="10">
    <location>
        <begin position="307"/>
        <end position="316"/>
    </location>
</feature>
<feature type="strand" evidence="10">
    <location>
        <begin position="322"/>
        <end position="324"/>
    </location>
</feature>
<feature type="turn" evidence="10">
    <location>
        <begin position="325"/>
        <end position="327"/>
    </location>
</feature>
<feature type="strand" evidence="10">
    <location>
        <begin position="328"/>
        <end position="332"/>
    </location>
</feature>
<feature type="helix" evidence="10">
    <location>
        <begin position="336"/>
        <end position="352"/>
    </location>
</feature>
<accession>P9WML5</accession>
<accession>L0TGI3</accession>
<accession>P72039</accession>
<evidence type="ECO:0000255" key="1">
    <source>
        <dbReference type="HAMAP-Rule" id="MF_01513"/>
    </source>
</evidence>
<evidence type="ECO:0000269" key="2">
    <source>
    </source>
</evidence>
<evidence type="ECO:0000269" key="3">
    <source>
    </source>
</evidence>
<evidence type="ECO:0000303" key="4">
    <source>
    </source>
</evidence>
<evidence type="ECO:0000303" key="5">
    <source>
    </source>
</evidence>
<evidence type="ECO:0000305" key="6"/>
<evidence type="ECO:0000312" key="7">
    <source>
        <dbReference type="EMBL" id="CCP46601.1"/>
    </source>
</evidence>
<evidence type="ECO:0007744" key="8">
    <source>
        <dbReference type="PDB" id="4R2N"/>
    </source>
</evidence>
<evidence type="ECO:0007744" key="9">
    <source>
        <dbReference type="PDB" id="4R5Z"/>
    </source>
</evidence>
<evidence type="ECO:0007829" key="10">
    <source>
        <dbReference type="PDB" id="4R5Z"/>
    </source>
</evidence>
<sequence length="353" mass="38040">MTARLRPELAGLPVYVPGKTVPGAIKLASNETVFGPLPSVRAAIDRATDTVNRYPDNGCVQLKAALARHLGPDFAPEHVAVGCGSVSLCQQLVQVTASVGDEVVFGWRSFELYPPQVRVAGAIPIQVPLTDHTFDLYAMLATVTDRTRLIFVCNPNNPTSTVVGPDALARFVEAVPAHILIAIDEAYVEYIRDGMRPDSLGLVRAHNNVVVLRTFSKAYGLAGLRIGYAIGHPDVITALDKVYVPFTVSSIGQAAAIASLDAADELLARTDTVVAERARVSAELRAAGFTLPPSQANFVWLPLGSRTQDFVEQAADARIVVRPYGTDGVRVTVAAPEENDAFLRFARRWRSDQ</sequence>
<dbReference type="EC" id="2.6.1.57" evidence="1 3"/>
<dbReference type="EMBL" id="AL123456">
    <property type="protein sequence ID" value="CCP46601.1"/>
    <property type="molecule type" value="Genomic_DNA"/>
</dbReference>
<dbReference type="PIR" id="H70694">
    <property type="entry name" value="H70694"/>
</dbReference>
<dbReference type="RefSeq" id="NP_218289.1">
    <property type="nucleotide sequence ID" value="NC_000962.3"/>
</dbReference>
<dbReference type="PDB" id="4R2N">
    <property type="method" value="X-ray"/>
    <property type="resolution" value="1.98 A"/>
    <property type="chains" value="A/B/C/D=2-353"/>
</dbReference>
<dbReference type="PDB" id="4R5Z">
    <property type="method" value="X-ray"/>
    <property type="resolution" value="1.95 A"/>
    <property type="chains" value="A/B/C/D=2-353"/>
</dbReference>
<dbReference type="PDBsum" id="4R2N"/>
<dbReference type="PDBsum" id="4R5Z"/>
<dbReference type="SMR" id="P9WML5"/>
<dbReference type="FunCoup" id="P9WML5">
    <property type="interactions" value="229"/>
</dbReference>
<dbReference type="STRING" id="83332.Rv3772"/>
<dbReference type="PaxDb" id="83332-Rv3772"/>
<dbReference type="DNASU" id="886105"/>
<dbReference type="GeneID" id="886105"/>
<dbReference type="KEGG" id="mtu:Rv3772"/>
<dbReference type="KEGG" id="mtv:RVBD_3772"/>
<dbReference type="TubercuList" id="Rv3772"/>
<dbReference type="eggNOG" id="COG0079">
    <property type="taxonomic scope" value="Bacteria"/>
</dbReference>
<dbReference type="InParanoid" id="P9WML5"/>
<dbReference type="OrthoDB" id="9809616at2"/>
<dbReference type="PhylomeDB" id="P9WML5"/>
<dbReference type="EvolutionaryTrace" id="P9WML5"/>
<dbReference type="Proteomes" id="UP000001584">
    <property type="component" value="Chromosome"/>
</dbReference>
<dbReference type="GO" id="GO:0004400">
    <property type="term" value="F:histidinol-phosphate transaminase activity"/>
    <property type="evidence" value="ECO:0007669"/>
    <property type="project" value="InterPro"/>
</dbReference>
<dbReference type="GO" id="GO:0080130">
    <property type="term" value="F:L-phenylalanine-2-oxoglutarate transaminase activity"/>
    <property type="evidence" value="ECO:0007669"/>
    <property type="project" value="RHEA"/>
</dbReference>
<dbReference type="GO" id="GO:0030170">
    <property type="term" value="F:pyridoxal phosphate binding"/>
    <property type="evidence" value="ECO:0007669"/>
    <property type="project" value="UniProtKB-UniRule"/>
</dbReference>
<dbReference type="GO" id="GO:0000105">
    <property type="term" value="P:L-histidine biosynthetic process"/>
    <property type="evidence" value="ECO:0007669"/>
    <property type="project" value="InterPro"/>
</dbReference>
<dbReference type="CDD" id="cd00609">
    <property type="entry name" value="AAT_like"/>
    <property type="match status" value="1"/>
</dbReference>
<dbReference type="Gene3D" id="3.90.1150.10">
    <property type="entry name" value="Aspartate Aminotransferase, domain 1"/>
    <property type="match status" value="1"/>
</dbReference>
<dbReference type="Gene3D" id="3.40.640.10">
    <property type="entry name" value="Type I PLP-dependent aspartate aminotransferase-like (Major domain)"/>
    <property type="match status" value="1"/>
</dbReference>
<dbReference type="HAMAP" id="MF_01023">
    <property type="entry name" value="HisC_aminotrans_2"/>
    <property type="match status" value="1"/>
</dbReference>
<dbReference type="HAMAP" id="MF_01513">
    <property type="entry name" value="Phe_aminotrans_2"/>
    <property type="match status" value="1"/>
</dbReference>
<dbReference type="InterPro" id="IPR001917">
    <property type="entry name" value="Aminotrans_II_pyridoxalP_BS"/>
</dbReference>
<dbReference type="InterPro" id="IPR004839">
    <property type="entry name" value="Aminotransferase_I/II_large"/>
</dbReference>
<dbReference type="InterPro" id="IPR024892">
    <property type="entry name" value="ArAT"/>
</dbReference>
<dbReference type="InterPro" id="IPR005861">
    <property type="entry name" value="HisP_aminotrans"/>
</dbReference>
<dbReference type="InterPro" id="IPR050106">
    <property type="entry name" value="HistidinolP_aminotransfase"/>
</dbReference>
<dbReference type="InterPro" id="IPR015424">
    <property type="entry name" value="PyrdxlP-dep_Trfase"/>
</dbReference>
<dbReference type="InterPro" id="IPR015421">
    <property type="entry name" value="PyrdxlP-dep_Trfase_major"/>
</dbReference>
<dbReference type="InterPro" id="IPR015422">
    <property type="entry name" value="PyrdxlP-dep_Trfase_small"/>
</dbReference>
<dbReference type="NCBIfam" id="NF002878">
    <property type="entry name" value="PRK03321.1"/>
    <property type="match status" value="1"/>
</dbReference>
<dbReference type="PANTHER" id="PTHR43643:SF3">
    <property type="entry name" value="HISTIDINOL-PHOSPHATE AMINOTRANSFERASE"/>
    <property type="match status" value="1"/>
</dbReference>
<dbReference type="PANTHER" id="PTHR43643">
    <property type="entry name" value="HISTIDINOL-PHOSPHATE AMINOTRANSFERASE 2"/>
    <property type="match status" value="1"/>
</dbReference>
<dbReference type="Pfam" id="PF00155">
    <property type="entry name" value="Aminotran_1_2"/>
    <property type="match status" value="1"/>
</dbReference>
<dbReference type="SUPFAM" id="SSF53383">
    <property type="entry name" value="PLP-dependent transferases"/>
    <property type="match status" value="1"/>
</dbReference>
<dbReference type="PROSITE" id="PS00599">
    <property type="entry name" value="AA_TRANSFER_CLASS_2"/>
    <property type="match status" value="1"/>
</dbReference>
<name>PATR_MYCTU</name>
<gene>
    <name evidence="1" type="primary">pat</name>
    <name evidence="4" type="synonym">hisC2</name>
    <name evidence="7" type="ordered locus">Rv3772</name>
    <name type="ORF">MTCY13D12.06</name>
</gene>
<reference key="1">
    <citation type="journal article" date="1998" name="Nature">
        <title>Deciphering the biology of Mycobacterium tuberculosis from the complete genome sequence.</title>
        <authorList>
            <person name="Cole S.T."/>
            <person name="Brosch R."/>
            <person name="Parkhill J."/>
            <person name="Garnier T."/>
            <person name="Churcher C.M."/>
            <person name="Harris D.E."/>
            <person name="Gordon S.V."/>
            <person name="Eiglmeier K."/>
            <person name="Gas S."/>
            <person name="Barry C.E. III"/>
            <person name="Tekaia F."/>
            <person name="Badcock K."/>
            <person name="Basham D."/>
            <person name="Brown D."/>
            <person name="Chillingworth T."/>
            <person name="Connor R."/>
            <person name="Davies R.M."/>
            <person name="Devlin K."/>
            <person name="Feltwell T."/>
            <person name="Gentles S."/>
            <person name="Hamlin N."/>
            <person name="Holroyd S."/>
            <person name="Hornsby T."/>
            <person name="Jagels K."/>
            <person name="Krogh A."/>
            <person name="McLean J."/>
            <person name="Moule S."/>
            <person name="Murphy L.D."/>
            <person name="Oliver S."/>
            <person name="Osborne J."/>
            <person name="Quail M.A."/>
            <person name="Rajandream M.A."/>
            <person name="Rogers J."/>
            <person name="Rutter S."/>
            <person name="Seeger K."/>
            <person name="Skelton S."/>
            <person name="Squares S."/>
            <person name="Squares R."/>
            <person name="Sulston J.E."/>
            <person name="Taylor K."/>
            <person name="Whitehead S."/>
            <person name="Barrell B.G."/>
        </authorList>
    </citation>
    <scope>NUCLEOTIDE SEQUENCE [LARGE SCALE GENOMIC DNA]</scope>
    <source>
        <strain>ATCC 25618 / H37Rv</strain>
    </source>
</reference>
<reference key="2">
    <citation type="journal article" date="2011" name="Mol. Cell. Proteomics">
        <title>Proteogenomic analysis of Mycobacterium tuberculosis by high resolution mass spectrometry.</title>
        <authorList>
            <person name="Kelkar D.S."/>
            <person name="Kumar D."/>
            <person name="Kumar P."/>
            <person name="Balakrishnan L."/>
            <person name="Muthusamy B."/>
            <person name="Yadav A.K."/>
            <person name="Shrivastava P."/>
            <person name="Marimuthu A."/>
            <person name="Anand S."/>
            <person name="Sundaram H."/>
            <person name="Kingsbury R."/>
            <person name="Harsha H.C."/>
            <person name="Nair B."/>
            <person name="Prasad T.S."/>
            <person name="Chauhan D.S."/>
            <person name="Katoch K."/>
            <person name="Katoch V.M."/>
            <person name="Kumar P."/>
            <person name="Chaerkady R."/>
            <person name="Ramachandran S."/>
            <person name="Dash D."/>
            <person name="Pandey A."/>
        </authorList>
    </citation>
    <scope>IDENTIFICATION BY MASS SPECTROMETRY [LARGE SCALE ANALYSIS]</scope>
    <source>
        <strain>ATCC 25618 / H37Rv</strain>
    </source>
</reference>
<reference key="3">
    <citation type="journal article" date="2012" name="Acta Crystallogr. F">
        <title>Molecular cloning, overexpression, purification, crystallization and preliminary X-ray diffraction studies of histidinol phosphate aminotransferase (HisC2) from Mycobacterium tuberculosis.</title>
        <authorList>
            <person name="Nasir N."/>
            <person name="Vyas R."/>
            <person name="Chugh C."/>
            <person name="Ahangar M.S."/>
            <person name="Biswal B.K."/>
        </authorList>
    </citation>
    <scope>SUBUNIT</scope>
    <scope>IDENTIFICATION BY MASS SPECTROMETRY</scope>
    <scope>CRYSTALLIZATION</scope>
    <source>
        <strain>H37Rv</strain>
    </source>
</reference>
<reference evidence="8 9" key="4">
    <citation type="journal article" date="2016" name="Sci. Rep.">
        <title>Crystal structures of Mycobacterium tuberculosis HspAT and ArAT reveal structural basis of their distinct substrate specificities.</title>
        <authorList>
            <person name="Nasir N."/>
            <person name="Anant A."/>
            <person name="Vyas R."/>
            <person name="Biswal B.K."/>
        </authorList>
    </citation>
    <scope>X-RAY CRYSTALLOGRAPHY (1.95 ANGSTROMS) OF 2-353 IN COMPLEXES WITH PYRIDOXAL 5'-PHOSPHATE; PHENYLALANINE AND SUCCINATE</scope>
    <scope>FUNCTION</scope>
    <scope>CATALYTIC ACTIVITY</scope>
    <scope>COFACTOR</scope>
    <scope>ACTIVITY REGULATION</scope>
    <scope>BIOPHYSICOCHEMICAL PROPERTIES</scope>
    <scope>SUBUNIT</scope>
    <scope>DOMAIN</scope>
</reference>
<protein>
    <recommendedName>
        <fullName evidence="5">Aromatic amino acid aminotransferase</fullName>
        <shortName evidence="5">ArAT</shortName>
        <ecNumber evidence="1 3">2.6.1.57</ecNumber>
    </recommendedName>
    <alternativeName>
        <fullName evidence="6">Phenylalanine aminotransferase</fullName>
    </alternativeName>
</protein>
<keyword id="KW-0002">3D-structure</keyword>
<keyword id="KW-0032">Aminotransferase</keyword>
<keyword id="KW-0663">Pyridoxal phosphate</keyword>
<keyword id="KW-1185">Reference proteome</keyword>
<keyword id="KW-0808">Transferase</keyword>
<proteinExistence type="evidence at protein level"/>